<reference key="1">
    <citation type="journal article" date="1995" name="Science">
        <title>The minimal gene complement of Mycoplasma genitalium.</title>
        <authorList>
            <person name="Fraser C.M."/>
            <person name="Gocayne J.D."/>
            <person name="White O."/>
            <person name="Adams M.D."/>
            <person name="Clayton R.A."/>
            <person name="Fleischmann R.D."/>
            <person name="Bult C.J."/>
            <person name="Kerlavage A.R."/>
            <person name="Sutton G.G."/>
            <person name="Kelley J.M."/>
            <person name="Fritchman J.L."/>
            <person name="Weidman J.F."/>
            <person name="Small K.V."/>
            <person name="Sandusky M."/>
            <person name="Fuhrmann J.L."/>
            <person name="Nguyen D.T."/>
            <person name="Utterback T.R."/>
            <person name="Saudek D.M."/>
            <person name="Phillips C.A."/>
            <person name="Merrick J.M."/>
            <person name="Tomb J.-F."/>
            <person name="Dougherty B.A."/>
            <person name="Bott K.F."/>
            <person name="Hu P.-C."/>
            <person name="Lucier T.S."/>
            <person name="Peterson S.N."/>
            <person name="Smith H.O."/>
            <person name="Hutchison C.A. III"/>
            <person name="Venter J.C."/>
        </authorList>
    </citation>
    <scope>NUCLEOTIDE SEQUENCE [LARGE SCALE GENOMIC DNA]</scope>
    <source>
        <strain>ATCC 33530 / DSM 19775 / NCTC 10195 / G37</strain>
    </source>
</reference>
<feature type="chain" id="PRO_0000129239" description="Large ribosomal subunit protein uL4">
    <location>
        <begin position="1"/>
        <end position="211"/>
    </location>
</feature>
<feature type="region of interest" description="Disordered" evidence="2">
    <location>
        <begin position="50"/>
        <end position="77"/>
    </location>
</feature>
<feature type="compositionally biased region" description="Basic residues" evidence="2">
    <location>
        <begin position="63"/>
        <end position="72"/>
    </location>
</feature>
<accession>P47398</accession>
<protein>
    <recommendedName>
        <fullName evidence="1">Large ribosomal subunit protein uL4</fullName>
    </recommendedName>
    <alternativeName>
        <fullName evidence="3">50S ribosomal protein L4</fullName>
    </alternativeName>
</protein>
<comment type="function">
    <text evidence="1">One of the primary rRNA binding proteins, this protein initially binds near the 5'-end of the 23S rRNA. It is important during the early stages of 50S assembly. It makes multiple contacts with different domains of the 23S rRNA in the assembled 50S subunit and ribosome.</text>
</comment>
<comment type="function">
    <text evidence="1">Forms part of the polypeptide exit tunnel.</text>
</comment>
<comment type="subunit">
    <text evidence="1">Part of the 50S ribosomal subunit.</text>
</comment>
<comment type="similarity">
    <text evidence="1">Belongs to the universal ribosomal protein uL4 family.</text>
</comment>
<name>RL4_MYCGE</name>
<evidence type="ECO:0000255" key="1">
    <source>
        <dbReference type="HAMAP-Rule" id="MF_01328"/>
    </source>
</evidence>
<evidence type="ECO:0000256" key="2">
    <source>
        <dbReference type="SAM" id="MobiDB-lite"/>
    </source>
</evidence>
<evidence type="ECO:0000305" key="3"/>
<dbReference type="EMBL" id="L43967">
    <property type="protein sequence ID" value="AAC71370.1"/>
    <property type="molecule type" value="Genomic_DNA"/>
</dbReference>
<dbReference type="PIR" id="H64216">
    <property type="entry name" value="H64216"/>
</dbReference>
<dbReference type="RefSeq" id="WP_009885836.1">
    <property type="nucleotide sequence ID" value="NC_000908.2"/>
</dbReference>
<dbReference type="SMR" id="P47398"/>
<dbReference type="FunCoup" id="P47398">
    <property type="interactions" value="212"/>
</dbReference>
<dbReference type="STRING" id="243273.MG_152"/>
<dbReference type="GeneID" id="88282285"/>
<dbReference type="KEGG" id="mge:MG_152"/>
<dbReference type="eggNOG" id="COG0088">
    <property type="taxonomic scope" value="Bacteria"/>
</dbReference>
<dbReference type="HOGENOM" id="CLU_041575_5_2_14"/>
<dbReference type="InParanoid" id="P47398"/>
<dbReference type="OrthoDB" id="9803201at2"/>
<dbReference type="BioCyc" id="MGEN243273:G1GJ2-176-MONOMER"/>
<dbReference type="Proteomes" id="UP000000807">
    <property type="component" value="Chromosome"/>
</dbReference>
<dbReference type="GO" id="GO:1990904">
    <property type="term" value="C:ribonucleoprotein complex"/>
    <property type="evidence" value="ECO:0007669"/>
    <property type="project" value="UniProtKB-KW"/>
</dbReference>
<dbReference type="GO" id="GO:0005840">
    <property type="term" value="C:ribosome"/>
    <property type="evidence" value="ECO:0007669"/>
    <property type="project" value="UniProtKB-KW"/>
</dbReference>
<dbReference type="GO" id="GO:0019843">
    <property type="term" value="F:rRNA binding"/>
    <property type="evidence" value="ECO:0007669"/>
    <property type="project" value="UniProtKB-UniRule"/>
</dbReference>
<dbReference type="GO" id="GO:0003735">
    <property type="term" value="F:structural constituent of ribosome"/>
    <property type="evidence" value="ECO:0000318"/>
    <property type="project" value="GO_Central"/>
</dbReference>
<dbReference type="GO" id="GO:0006412">
    <property type="term" value="P:translation"/>
    <property type="evidence" value="ECO:0007669"/>
    <property type="project" value="UniProtKB-UniRule"/>
</dbReference>
<dbReference type="Gene3D" id="3.40.1370.10">
    <property type="match status" value="1"/>
</dbReference>
<dbReference type="HAMAP" id="MF_01328_B">
    <property type="entry name" value="Ribosomal_uL4_B"/>
    <property type="match status" value="1"/>
</dbReference>
<dbReference type="InterPro" id="IPR002136">
    <property type="entry name" value="Ribosomal_uL4"/>
</dbReference>
<dbReference type="InterPro" id="IPR013005">
    <property type="entry name" value="Ribosomal_uL4-like"/>
</dbReference>
<dbReference type="InterPro" id="IPR023574">
    <property type="entry name" value="Ribosomal_uL4_dom_sf"/>
</dbReference>
<dbReference type="NCBIfam" id="TIGR03953">
    <property type="entry name" value="rplD_bact"/>
    <property type="match status" value="1"/>
</dbReference>
<dbReference type="PANTHER" id="PTHR10746">
    <property type="entry name" value="50S RIBOSOMAL PROTEIN L4"/>
    <property type="match status" value="1"/>
</dbReference>
<dbReference type="PANTHER" id="PTHR10746:SF6">
    <property type="entry name" value="LARGE RIBOSOMAL SUBUNIT PROTEIN UL4M"/>
    <property type="match status" value="1"/>
</dbReference>
<dbReference type="Pfam" id="PF00573">
    <property type="entry name" value="Ribosomal_L4"/>
    <property type="match status" value="1"/>
</dbReference>
<dbReference type="SUPFAM" id="SSF52166">
    <property type="entry name" value="Ribosomal protein L4"/>
    <property type="match status" value="1"/>
</dbReference>
<gene>
    <name evidence="1" type="primary">rplD</name>
    <name evidence="1" type="synonym">rpl4</name>
    <name type="ordered locus">MG152</name>
</gene>
<keyword id="KW-1185">Reference proteome</keyword>
<keyword id="KW-0687">Ribonucleoprotein</keyword>
<keyword id="KW-0689">Ribosomal protein</keyword>
<keyword id="KW-0694">RNA-binding</keyword>
<keyword id="KW-0699">rRNA-binding</keyword>
<organism>
    <name type="scientific">Mycoplasma genitalium (strain ATCC 33530 / DSM 19775 / NCTC 10195 / G37)</name>
    <name type="common">Mycoplasmoides genitalium</name>
    <dbReference type="NCBI Taxonomy" id="243273"/>
    <lineage>
        <taxon>Bacteria</taxon>
        <taxon>Bacillati</taxon>
        <taxon>Mycoplasmatota</taxon>
        <taxon>Mycoplasmoidales</taxon>
        <taxon>Mycoplasmoidaceae</taxon>
        <taxon>Mycoplasmoides</taxon>
    </lineage>
</organism>
<proteinExistence type="inferred from homology"/>
<sequence length="211" mass="23508">MAKLKVIQFDGSFKGEIQPANHLLLKKAVIQPVFDAILLEQAACRQGTHSTLTKGEVSGGGKKPYKQKHTGKARQGSIRNPHYVGGGVVFGPKPNRNYKLKLNKKAYQLALTSAFAQKLNNNQVIVAEAKLFEQTNAKTKKMLTFLKNAKLTEQKLLFVIDTISKPLLLSTNNLKQIVVKQFNKVSVRDLLLAKTIIIEKAAFTKLEERLK</sequence>